<sequence length="236" mass="26565">MLSTLIRRLSRALLWFVAGSIVLVLVFRWVPPPGTALMVERKVQSWVNGEPIDLQRDWEPWENISDELKVAVIAGEDQKFASHWGFDLPAIQAALAHNERGGNIRGASTLTQQVAKNLFLWSGRSWFRKGLEAWFTALIELFWSKERILEVYLNSAEWGKGVFGAQAAARYHFGVDASRLSRQQAAQLAAVLPSPIKWSASRPSAYVASRAGWIRRQMSQLGGPSYLMQLDSSRKL</sequence>
<protein>
    <recommendedName>
        <fullName evidence="1">Biosynthetic peptidoglycan transglycosylase</fullName>
        <ecNumber evidence="1">2.4.99.28</ecNumber>
    </recommendedName>
    <alternativeName>
        <fullName evidence="1">Glycan polymerase</fullName>
    </alternativeName>
    <alternativeName>
        <fullName evidence="1">Peptidoglycan glycosyltransferase MtgA</fullName>
        <shortName evidence="1">PGT</shortName>
    </alternativeName>
</protein>
<name>MTGA_PSEPK</name>
<feature type="chain" id="PRO_0000083138" description="Biosynthetic peptidoglycan transglycosylase">
    <location>
        <begin position="1"/>
        <end position="236"/>
    </location>
</feature>
<feature type="transmembrane region" description="Helical" evidence="1">
    <location>
        <begin position="12"/>
        <end position="31"/>
    </location>
</feature>
<keyword id="KW-0997">Cell inner membrane</keyword>
<keyword id="KW-1003">Cell membrane</keyword>
<keyword id="KW-0133">Cell shape</keyword>
<keyword id="KW-0961">Cell wall biogenesis/degradation</keyword>
<keyword id="KW-0328">Glycosyltransferase</keyword>
<keyword id="KW-0472">Membrane</keyword>
<keyword id="KW-0573">Peptidoglycan synthesis</keyword>
<keyword id="KW-1185">Reference proteome</keyword>
<keyword id="KW-0808">Transferase</keyword>
<keyword id="KW-0812">Transmembrane</keyword>
<keyword id="KW-1133">Transmembrane helix</keyword>
<organism>
    <name type="scientific">Pseudomonas putida (strain ATCC 47054 / DSM 6125 / CFBP 8728 / NCIMB 11950 / KT2440)</name>
    <dbReference type="NCBI Taxonomy" id="160488"/>
    <lineage>
        <taxon>Bacteria</taxon>
        <taxon>Pseudomonadati</taxon>
        <taxon>Pseudomonadota</taxon>
        <taxon>Gammaproteobacteria</taxon>
        <taxon>Pseudomonadales</taxon>
        <taxon>Pseudomonadaceae</taxon>
        <taxon>Pseudomonas</taxon>
    </lineage>
</organism>
<reference key="1">
    <citation type="journal article" date="2002" name="Environ. Microbiol.">
        <title>Complete genome sequence and comparative analysis of the metabolically versatile Pseudomonas putida KT2440.</title>
        <authorList>
            <person name="Nelson K.E."/>
            <person name="Weinel C."/>
            <person name="Paulsen I.T."/>
            <person name="Dodson R.J."/>
            <person name="Hilbert H."/>
            <person name="Martins dos Santos V.A.P."/>
            <person name="Fouts D.E."/>
            <person name="Gill S.R."/>
            <person name="Pop M."/>
            <person name="Holmes M."/>
            <person name="Brinkac L.M."/>
            <person name="Beanan M.J."/>
            <person name="DeBoy R.T."/>
            <person name="Daugherty S.C."/>
            <person name="Kolonay J.F."/>
            <person name="Madupu R."/>
            <person name="Nelson W.C."/>
            <person name="White O."/>
            <person name="Peterson J.D."/>
            <person name="Khouri H.M."/>
            <person name="Hance I."/>
            <person name="Chris Lee P."/>
            <person name="Holtzapple E.K."/>
            <person name="Scanlan D."/>
            <person name="Tran K."/>
            <person name="Moazzez A."/>
            <person name="Utterback T.R."/>
            <person name="Rizzo M."/>
            <person name="Lee K."/>
            <person name="Kosack D."/>
            <person name="Moestl D."/>
            <person name="Wedler H."/>
            <person name="Lauber J."/>
            <person name="Stjepandic D."/>
            <person name="Hoheisel J."/>
            <person name="Straetz M."/>
            <person name="Heim S."/>
            <person name="Kiewitz C."/>
            <person name="Eisen J.A."/>
            <person name="Timmis K.N."/>
            <person name="Duesterhoeft A."/>
            <person name="Tuemmler B."/>
            <person name="Fraser C.M."/>
        </authorList>
    </citation>
    <scope>NUCLEOTIDE SEQUENCE [LARGE SCALE GENOMIC DNA]</scope>
    <source>
        <strain>ATCC 47054 / DSM 6125 / CFBP 8728 / NCIMB 11950 / KT2440</strain>
    </source>
</reference>
<gene>
    <name evidence="1" type="primary">mtgA</name>
    <name type="ordered locus">PP_5107</name>
</gene>
<proteinExistence type="inferred from homology"/>
<dbReference type="EC" id="2.4.99.28" evidence="1"/>
<dbReference type="EMBL" id="AE015451">
    <property type="protein sequence ID" value="AAN70672.1"/>
    <property type="molecule type" value="Genomic_DNA"/>
</dbReference>
<dbReference type="RefSeq" id="NP_747208.1">
    <property type="nucleotide sequence ID" value="NC_002947.4"/>
</dbReference>
<dbReference type="SMR" id="Q88CS3"/>
<dbReference type="STRING" id="160488.PP_5107"/>
<dbReference type="CAZy" id="GT51">
    <property type="family name" value="Glycosyltransferase Family 51"/>
</dbReference>
<dbReference type="PaxDb" id="160488-PP_5107"/>
<dbReference type="KEGG" id="ppu:PP_5107"/>
<dbReference type="PATRIC" id="fig|160488.4.peg.5451"/>
<dbReference type="eggNOG" id="COG0744">
    <property type="taxonomic scope" value="Bacteria"/>
</dbReference>
<dbReference type="HOGENOM" id="CLU_006354_1_1_6"/>
<dbReference type="OrthoDB" id="9766909at2"/>
<dbReference type="PhylomeDB" id="Q88CS3"/>
<dbReference type="BioCyc" id="PPUT160488:G1G01-5451-MONOMER"/>
<dbReference type="UniPathway" id="UPA00219"/>
<dbReference type="Proteomes" id="UP000000556">
    <property type="component" value="Chromosome"/>
</dbReference>
<dbReference type="GO" id="GO:0009274">
    <property type="term" value="C:peptidoglycan-based cell wall"/>
    <property type="evidence" value="ECO:0007669"/>
    <property type="project" value="InterPro"/>
</dbReference>
<dbReference type="GO" id="GO:0005886">
    <property type="term" value="C:plasma membrane"/>
    <property type="evidence" value="ECO:0007669"/>
    <property type="project" value="UniProtKB-SubCell"/>
</dbReference>
<dbReference type="GO" id="GO:0016763">
    <property type="term" value="F:pentosyltransferase activity"/>
    <property type="evidence" value="ECO:0007669"/>
    <property type="project" value="InterPro"/>
</dbReference>
<dbReference type="GO" id="GO:0008955">
    <property type="term" value="F:peptidoglycan glycosyltransferase activity"/>
    <property type="evidence" value="ECO:0007669"/>
    <property type="project" value="UniProtKB-UniRule"/>
</dbReference>
<dbReference type="GO" id="GO:0071555">
    <property type="term" value="P:cell wall organization"/>
    <property type="evidence" value="ECO:0007669"/>
    <property type="project" value="UniProtKB-KW"/>
</dbReference>
<dbReference type="GO" id="GO:0009252">
    <property type="term" value="P:peptidoglycan biosynthetic process"/>
    <property type="evidence" value="ECO:0007669"/>
    <property type="project" value="UniProtKB-UniRule"/>
</dbReference>
<dbReference type="GO" id="GO:0008360">
    <property type="term" value="P:regulation of cell shape"/>
    <property type="evidence" value="ECO:0007669"/>
    <property type="project" value="UniProtKB-KW"/>
</dbReference>
<dbReference type="Gene3D" id="1.10.3810.10">
    <property type="entry name" value="Biosynthetic peptidoglycan transglycosylase-like"/>
    <property type="match status" value="1"/>
</dbReference>
<dbReference type="HAMAP" id="MF_00766">
    <property type="entry name" value="PGT_MtgA"/>
    <property type="match status" value="1"/>
</dbReference>
<dbReference type="InterPro" id="IPR001264">
    <property type="entry name" value="Glyco_trans_51"/>
</dbReference>
<dbReference type="InterPro" id="IPR023346">
    <property type="entry name" value="Lysozyme-like_dom_sf"/>
</dbReference>
<dbReference type="InterPro" id="IPR036950">
    <property type="entry name" value="PBP_transglycosylase"/>
</dbReference>
<dbReference type="InterPro" id="IPR011812">
    <property type="entry name" value="Pep_trsgly"/>
</dbReference>
<dbReference type="NCBIfam" id="TIGR02070">
    <property type="entry name" value="mono_pep_trsgly"/>
    <property type="match status" value="1"/>
</dbReference>
<dbReference type="PANTHER" id="PTHR30400:SF0">
    <property type="entry name" value="BIOSYNTHETIC PEPTIDOGLYCAN TRANSGLYCOSYLASE"/>
    <property type="match status" value="1"/>
</dbReference>
<dbReference type="PANTHER" id="PTHR30400">
    <property type="entry name" value="MONOFUNCTIONAL BIOSYNTHETIC PEPTIDOGLYCAN TRANSGLYCOSYLASE"/>
    <property type="match status" value="1"/>
</dbReference>
<dbReference type="Pfam" id="PF00912">
    <property type="entry name" value="Transgly"/>
    <property type="match status" value="1"/>
</dbReference>
<dbReference type="SUPFAM" id="SSF53955">
    <property type="entry name" value="Lysozyme-like"/>
    <property type="match status" value="1"/>
</dbReference>
<comment type="function">
    <text evidence="1">Peptidoglycan polymerase that catalyzes glycan chain elongation from lipid-linked precursors.</text>
</comment>
<comment type="catalytic activity">
    <reaction evidence="1">
        <text>[GlcNAc-(1-&gt;4)-Mur2Ac(oyl-L-Ala-gamma-D-Glu-L-Lys-D-Ala-D-Ala)](n)-di-trans,octa-cis-undecaprenyl diphosphate + beta-D-GlcNAc-(1-&gt;4)-Mur2Ac(oyl-L-Ala-gamma-D-Glu-L-Lys-D-Ala-D-Ala)-di-trans,octa-cis-undecaprenyl diphosphate = [GlcNAc-(1-&gt;4)-Mur2Ac(oyl-L-Ala-gamma-D-Glu-L-Lys-D-Ala-D-Ala)](n+1)-di-trans,octa-cis-undecaprenyl diphosphate + di-trans,octa-cis-undecaprenyl diphosphate + H(+)</text>
        <dbReference type="Rhea" id="RHEA:23708"/>
        <dbReference type="Rhea" id="RHEA-COMP:9602"/>
        <dbReference type="Rhea" id="RHEA-COMP:9603"/>
        <dbReference type="ChEBI" id="CHEBI:15378"/>
        <dbReference type="ChEBI" id="CHEBI:58405"/>
        <dbReference type="ChEBI" id="CHEBI:60033"/>
        <dbReference type="ChEBI" id="CHEBI:78435"/>
        <dbReference type="EC" id="2.4.99.28"/>
    </reaction>
</comment>
<comment type="pathway">
    <text evidence="1">Cell wall biogenesis; peptidoglycan biosynthesis.</text>
</comment>
<comment type="subcellular location">
    <subcellularLocation>
        <location evidence="1">Cell inner membrane</location>
        <topology evidence="1">Single-pass membrane protein</topology>
    </subcellularLocation>
</comment>
<comment type="similarity">
    <text evidence="1">Belongs to the glycosyltransferase 51 family.</text>
</comment>
<accession>Q88CS3</accession>
<evidence type="ECO:0000255" key="1">
    <source>
        <dbReference type="HAMAP-Rule" id="MF_00766"/>
    </source>
</evidence>